<proteinExistence type="inferred from homology"/>
<gene>
    <name type="primary">pyrD</name>
    <name type="ordered locus">Daud_1300</name>
</gene>
<evidence type="ECO:0000250" key="1"/>
<evidence type="ECO:0000305" key="2"/>
<accession>B1I4M6</accession>
<reference key="1">
    <citation type="submission" date="2007-10" db="EMBL/GenBank/DDBJ databases">
        <title>Complete sequence of chromosome of Desulforudis audaxviator MP104C.</title>
        <authorList>
            <person name="Copeland A."/>
            <person name="Lucas S."/>
            <person name="Lapidus A."/>
            <person name="Barry K."/>
            <person name="Glavina del Rio T."/>
            <person name="Dalin E."/>
            <person name="Tice H."/>
            <person name="Bruce D."/>
            <person name="Pitluck S."/>
            <person name="Lowry S.R."/>
            <person name="Larimer F."/>
            <person name="Land M.L."/>
            <person name="Hauser L."/>
            <person name="Kyrpides N."/>
            <person name="Ivanova N.N."/>
            <person name="Richardson P."/>
        </authorList>
    </citation>
    <scope>NUCLEOTIDE SEQUENCE [LARGE SCALE GENOMIC DNA]</scope>
    <source>
        <strain>MP104C</strain>
    </source>
</reference>
<protein>
    <recommendedName>
        <fullName>Dihydroorotate dehydrogenase B (NAD(+)), catalytic subunit</fullName>
        <shortName>DHOD B</shortName>
        <shortName>DHODase B</shortName>
        <shortName>DHOdehase B</shortName>
        <ecNumber>1.3.1.14</ecNumber>
    </recommendedName>
    <alternativeName>
        <fullName>Dihydroorotate oxidase B</fullName>
    </alternativeName>
    <alternativeName>
        <fullName>Orotate reductase (NADH)</fullName>
    </alternativeName>
</protein>
<keyword id="KW-0963">Cytoplasm</keyword>
<keyword id="KW-0285">Flavoprotein</keyword>
<keyword id="KW-0288">FMN</keyword>
<keyword id="KW-0520">NAD</keyword>
<keyword id="KW-0560">Oxidoreductase</keyword>
<keyword id="KW-0665">Pyrimidine biosynthesis</keyword>
<keyword id="KW-1185">Reference proteome</keyword>
<dbReference type="EC" id="1.3.1.14"/>
<dbReference type="EMBL" id="CP000860">
    <property type="protein sequence ID" value="ACA59811.1"/>
    <property type="molecule type" value="Genomic_DNA"/>
</dbReference>
<dbReference type="RefSeq" id="WP_012302396.1">
    <property type="nucleotide sequence ID" value="NC_010424.1"/>
</dbReference>
<dbReference type="SMR" id="B1I4M6"/>
<dbReference type="STRING" id="477974.Daud_1300"/>
<dbReference type="KEGG" id="dau:Daud_1300"/>
<dbReference type="eggNOG" id="COG0167">
    <property type="taxonomic scope" value="Bacteria"/>
</dbReference>
<dbReference type="HOGENOM" id="CLU_042042_0_0_9"/>
<dbReference type="OrthoDB" id="9794954at2"/>
<dbReference type="UniPathway" id="UPA00070">
    <property type="reaction ID" value="UER00945"/>
</dbReference>
<dbReference type="Proteomes" id="UP000008544">
    <property type="component" value="Chromosome"/>
</dbReference>
<dbReference type="GO" id="GO:0005737">
    <property type="term" value="C:cytoplasm"/>
    <property type="evidence" value="ECO:0007669"/>
    <property type="project" value="UniProtKB-SubCell"/>
</dbReference>
<dbReference type="GO" id="GO:0004589">
    <property type="term" value="F:dihydroorotate dehydrogenase (NAD+) activity"/>
    <property type="evidence" value="ECO:0007669"/>
    <property type="project" value="UniProtKB-EC"/>
</dbReference>
<dbReference type="GO" id="GO:0006207">
    <property type="term" value="P:'de novo' pyrimidine nucleobase biosynthetic process"/>
    <property type="evidence" value="ECO:0007669"/>
    <property type="project" value="InterPro"/>
</dbReference>
<dbReference type="GO" id="GO:0044205">
    <property type="term" value="P:'de novo' UMP biosynthetic process"/>
    <property type="evidence" value="ECO:0007669"/>
    <property type="project" value="UniProtKB-UniRule"/>
</dbReference>
<dbReference type="CDD" id="cd04740">
    <property type="entry name" value="DHOD_1B_like"/>
    <property type="match status" value="1"/>
</dbReference>
<dbReference type="FunFam" id="3.20.20.70:FF:000027">
    <property type="entry name" value="Dihydropyrimidine dehydrogenase [NADP(+)]"/>
    <property type="match status" value="1"/>
</dbReference>
<dbReference type="Gene3D" id="3.20.20.70">
    <property type="entry name" value="Aldolase class I"/>
    <property type="match status" value="1"/>
</dbReference>
<dbReference type="HAMAP" id="MF_00224">
    <property type="entry name" value="DHO_dh_type1"/>
    <property type="match status" value="1"/>
</dbReference>
<dbReference type="InterPro" id="IPR013785">
    <property type="entry name" value="Aldolase_TIM"/>
</dbReference>
<dbReference type="InterPro" id="IPR050074">
    <property type="entry name" value="DHO_dehydrogenase"/>
</dbReference>
<dbReference type="InterPro" id="IPR033888">
    <property type="entry name" value="DHOD_1B"/>
</dbReference>
<dbReference type="InterPro" id="IPR024920">
    <property type="entry name" value="Dihydroorotate_DH_1"/>
</dbReference>
<dbReference type="InterPro" id="IPR012135">
    <property type="entry name" value="Dihydroorotate_DH_1_2"/>
</dbReference>
<dbReference type="InterPro" id="IPR005720">
    <property type="entry name" value="Dihydroorotate_DH_cat"/>
</dbReference>
<dbReference type="InterPro" id="IPR001295">
    <property type="entry name" value="Dihydroorotate_DH_CS"/>
</dbReference>
<dbReference type="InterPro" id="IPR049622">
    <property type="entry name" value="Dihydroorotate_DH_I"/>
</dbReference>
<dbReference type="NCBIfam" id="NF005574">
    <property type="entry name" value="PRK07259.1"/>
    <property type="match status" value="1"/>
</dbReference>
<dbReference type="NCBIfam" id="TIGR01037">
    <property type="entry name" value="pyrD_sub1_fam"/>
    <property type="match status" value="1"/>
</dbReference>
<dbReference type="PANTHER" id="PTHR48109:SF1">
    <property type="entry name" value="DIHYDROOROTATE DEHYDROGENASE (FUMARATE)"/>
    <property type="match status" value="1"/>
</dbReference>
<dbReference type="PANTHER" id="PTHR48109">
    <property type="entry name" value="DIHYDROOROTATE DEHYDROGENASE (QUINONE), MITOCHONDRIAL-RELATED"/>
    <property type="match status" value="1"/>
</dbReference>
<dbReference type="Pfam" id="PF01180">
    <property type="entry name" value="DHO_dh"/>
    <property type="match status" value="1"/>
</dbReference>
<dbReference type="PIRSF" id="PIRSF000164">
    <property type="entry name" value="DHO_oxidase"/>
    <property type="match status" value="1"/>
</dbReference>
<dbReference type="SUPFAM" id="SSF51395">
    <property type="entry name" value="FMN-linked oxidoreductases"/>
    <property type="match status" value="1"/>
</dbReference>
<dbReference type="PROSITE" id="PS00911">
    <property type="entry name" value="DHODEHASE_1"/>
    <property type="match status" value="1"/>
</dbReference>
<dbReference type="PROSITE" id="PS00912">
    <property type="entry name" value="DHODEHASE_2"/>
    <property type="match status" value="1"/>
</dbReference>
<feature type="chain" id="PRO_1000100221" description="Dihydroorotate dehydrogenase B (NAD(+)), catalytic subunit">
    <location>
        <begin position="1"/>
        <end position="307"/>
    </location>
</feature>
<feature type="active site" description="Nucleophile">
    <location>
        <position position="131"/>
    </location>
</feature>
<feature type="binding site" evidence="1">
    <location>
        <position position="22"/>
    </location>
    <ligand>
        <name>FMN</name>
        <dbReference type="ChEBI" id="CHEBI:58210"/>
    </ligand>
</feature>
<feature type="binding site" evidence="1">
    <location>
        <begin position="46"/>
        <end position="47"/>
    </location>
    <ligand>
        <name>FMN</name>
        <dbReference type="ChEBI" id="CHEBI:58210"/>
    </ligand>
</feature>
<feature type="binding site" evidence="1">
    <location>
        <position position="46"/>
    </location>
    <ligand>
        <name>substrate</name>
    </ligand>
</feature>
<feature type="binding site" evidence="1">
    <location>
        <begin position="70"/>
        <end position="74"/>
    </location>
    <ligand>
        <name>substrate</name>
    </ligand>
</feature>
<feature type="binding site" evidence="1">
    <location>
        <position position="128"/>
    </location>
    <ligand>
        <name>FMN</name>
        <dbReference type="ChEBI" id="CHEBI:58210"/>
    </ligand>
</feature>
<feature type="binding site" evidence="1">
    <location>
        <position position="128"/>
    </location>
    <ligand>
        <name>substrate</name>
    </ligand>
</feature>
<feature type="binding site" evidence="1">
    <location>
        <position position="166"/>
    </location>
    <ligand>
        <name>FMN</name>
        <dbReference type="ChEBI" id="CHEBI:58210"/>
    </ligand>
</feature>
<feature type="binding site" evidence="1">
    <location>
        <position position="192"/>
    </location>
    <ligand>
        <name>FMN</name>
        <dbReference type="ChEBI" id="CHEBI:58210"/>
    </ligand>
</feature>
<feature type="binding site" evidence="1">
    <location>
        <begin position="193"/>
        <end position="194"/>
    </location>
    <ligand>
        <name>substrate</name>
    </ligand>
</feature>
<feature type="binding site" evidence="1">
    <location>
        <position position="218"/>
    </location>
    <ligand>
        <name>FMN</name>
        <dbReference type="ChEBI" id="CHEBI:58210"/>
    </ligand>
</feature>
<feature type="binding site" evidence="1">
    <location>
        <begin position="244"/>
        <end position="245"/>
    </location>
    <ligand>
        <name>FMN</name>
        <dbReference type="ChEBI" id="CHEBI:58210"/>
    </ligand>
</feature>
<feature type="binding site" evidence="1">
    <location>
        <begin position="266"/>
        <end position="267"/>
    </location>
    <ligand>
        <name>FMN</name>
        <dbReference type="ChEBI" id="CHEBI:58210"/>
    </ligand>
</feature>
<name>PYRDB_DESAP</name>
<organism>
    <name type="scientific">Desulforudis audaxviator (strain MP104C)</name>
    <dbReference type="NCBI Taxonomy" id="477974"/>
    <lineage>
        <taxon>Bacteria</taxon>
        <taxon>Bacillati</taxon>
        <taxon>Bacillota</taxon>
        <taxon>Clostridia</taxon>
        <taxon>Thermoanaerobacterales</taxon>
        <taxon>Candidatus Desulforudaceae</taxon>
        <taxon>Candidatus Desulforudis</taxon>
    </lineage>
</organism>
<comment type="function">
    <text evidence="1">Catalyzes the conversion of dihydroorotate to orotate with NAD(+) as electron acceptor.</text>
</comment>
<comment type="catalytic activity">
    <reaction>
        <text>(S)-dihydroorotate + NAD(+) = orotate + NADH + H(+)</text>
        <dbReference type="Rhea" id="RHEA:13513"/>
        <dbReference type="ChEBI" id="CHEBI:15378"/>
        <dbReference type="ChEBI" id="CHEBI:30839"/>
        <dbReference type="ChEBI" id="CHEBI:30864"/>
        <dbReference type="ChEBI" id="CHEBI:57540"/>
        <dbReference type="ChEBI" id="CHEBI:57945"/>
        <dbReference type="EC" id="1.3.1.14"/>
    </reaction>
</comment>
<comment type="cofactor">
    <cofactor evidence="1">
        <name>FMN</name>
        <dbReference type="ChEBI" id="CHEBI:58210"/>
    </cofactor>
    <text evidence="1">Binds 1 FMN per subunit.</text>
</comment>
<comment type="pathway">
    <text>Pyrimidine metabolism; UMP biosynthesis via de novo pathway; orotate from (S)-dihydroorotate (NAD(+) route): step 1/1.</text>
</comment>
<comment type="subunit">
    <text evidence="1">Heterotetramer of 2 PyrK and 2 PyrD type B subunits.</text>
</comment>
<comment type="subcellular location">
    <subcellularLocation>
        <location evidence="1">Cytoplasm</location>
    </subcellularLocation>
</comment>
<comment type="similarity">
    <text evidence="2">Belongs to the dihydroorotate dehydrogenase family. Type 1 subfamily.</text>
</comment>
<sequence length="307" mass="31477">MKVKTAVAIAGLTLKNPVLTASGTVGFGEEYAPYLDLAGLGALVVKTVTLKPRAGNPPPRITETPAGVINAVGLQNPGVEALVRDILPRLARFDVPVIVSIAGETVDEYARLAGRLDGVPGIAALEVNISCPNVKAGGIAFGTEPAMTAAVVRQVRENTRLPVIAKLSPNVTDIRTIALAAAGAGADALSLINTLSAMVIDVERRRPLLGNVFGGLSGPAVRPVAVRAVWQVYQAVELPLIGMGGIMTARDALEFILAGARAVAVGTANLVNPGAAAAVAADLEQYLTEQGIRDINELVGAAHRTGG</sequence>